<feature type="chain" id="PRO_0000368479" description="ATP synthase subunit b">
    <location>
        <begin position="1"/>
        <end position="156"/>
    </location>
</feature>
<feature type="transmembrane region" description="Helical" evidence="1">
    <location>
        <begin position="11"/>
        <end position="31"/>
    </location>
</feature>
<accession>B5YXE0</accession>
<gene>
    <name evidence="1" type="primary">atpF</name>
    <name type="ordered locus">ECH74115_5172</name>
</gene>
<keyword id="KW-0066">ATP synthesis</keyword>
<keyword id="KW-0997">Cell inner membrane</keyword>
<keyword id="KW-1003">Cell membrane</keyword>
<keyword id="KW-0138">CF(0)</keyword>
<keyword id="KW-0375">Hydrogen ion transport</keyword>
<keyword id="KW-0406">Ion transport</keyword>
<keyword id="KW-0472">Membrane</keyword>
<keyword id="KW-0812">Transmembrane</keyword>
<keyword id="KW-1133">Transmembrane helix</keyword>
<keyword id="KW-0813">Transport</keyword>
<comment type="function">
    <text evidence="1">F(1)F(0) ATP synthase produces ATP from ADP in the presence of a proton or sodium gradient. F-type ATPases consist of two structural domains, F(1) containing the extramembraneous catalytic core and F(0) containing the membrane proton channel, linked together by a central stalk and a peripheral stalk. During catalysis, ATP synthesis in the catalytic domain of F(1) is coupled via a rotary mechanism of the central stalk subunits to proton translocation.</text>
</comment>
<comment type="function">
    <text evidence="1">Component of the F(0) channel, it forms part of the peripheral stalk, linking F(1) to F(0).</text>
</comment>
<comment type="subunit">
    <text evidence="1">F-type ATPases have 2 components, F(1) - the catalytic core - and F(0) - the membrane proton channel. F(1) has five subunits: alpha(3), beta(3), gamma(1), delta(1), epsilon(1). F(0) has three main subunits: a(1), b(2) and c(10-14). The alpha and beta chains form an alternating ring which encloses part of the gamma chain. F(1) is attached to F(0) by a central stalk formed by the gamma and epsilon chains, while a peripheral stalk is formed by the delta and b chains.</text>
</comment>
<comment type="subcellular location">
    <subcellularLocation>
        <location evidence="1">Cell inner membrane</location>
        <topology evidence="1">Single-pass membrane protein</topology>
    </subcellularLocation>
</comment>
<comment type="similarity">
    <text evidence="1">Belongs to the ATPase B chain family.</text>
</comment>
<dbReference type="EMBL" id="CP001164">
    <property type="protein sequence ID" value="ACI34939.1"/>
    <property type="molecule type" value="Genomic_DNA"/>
</dbReference>
<dbReference type="RefSeq" id="WP_001052219.1">
    <property type="nucleotide sequence ID" value="NC_011353.1"/>
</dbReference>
<dbReference type="SMR" id="B5YXE0"/>
<dbReference type="GeneID" id="93778231"/>
<dbReference type="KEGG" id="ecf:ECH74115_5172"/>
<dbReference type="HOGENOM" id="CLU_079215_4_5_6"/>
<dbReference type="GO" id="GO:0005886">
    <property type="term" value="C:plasma membrane"/>
    <property type="evidence" value="ECO:0007669"/>
    <property type="project" value="UniProtKB-SubCell"/>
</dbReference>
<dbReference type="GO" id="GO:0045259">
    <property type="term" value="C:proton-transporting ATP synthase complex"/>
    <property type="evidence" value="ECO:0007669"/>
    <property type="project" value="UniProtKB-KW"/>
</dbReference>
<dbReference type="GO" id="GO:0046933">
    <property type="term" value="F:proton-transporting ATP synthase activity, rotational mechanism"/>
    <property type="evidence" value="ECO:0007669"/>
    <property type="project" value="UniProtKB-UniRule"/>
</dbReference>
<dbReference type="GO" id="GO:0046961">
    <property type="term" value="F:proton-transporting ATPase activity, rotational mechanism"/>
    <property type="evidence" value="ECO:0007669"/>
    <property type="project" value="TreeGrafter"/>
</dbReference>
<dbReference type="CDD" id="cd06503">
    <property type="entry name" value="ATP-synt_Fo_b"/>
    <property type="match status" value="1"/>
</dbReference>
<dbReference type="FunFam" id="1.20.5.620:FF:000001">
    <property type="entry name" value="ATP synthase subunit b"/>
    <property type="match status" value="1"/>
</dbReference>
<dbReference type="Gene3D" id="1.20.5.620">
    <property type="entry name" value="F1F0 ATP synthase subunit B, membrane domain"/>
    <property type="match status" value="1"/>
</dbReference>
<dbReference type="HAMAP" id="MF_01398">
    <property type="entry name" value="ATP_synth_b_bprime"/>
    <property type="match status" value="1"/>
</dbReference>
<dbReference type="InterPro" id="IPR028987">
    <property type="entry name" value="ATP_synth_B-like_membr_sf"/>
</dbReference>
<dbReference type="InterPro" id="IPR002146">
    <property type="entry name" value="ATP_synth_b/b'su_bac/chlpt"/>
</dbReference>
<dbReference type="InterPro" id="IPR005864">
    <property type="entry name" value="ATP_synth_F0_bsu_bac"/>
</dbReference>
<dbReference type="InterPro" id="IPR050059">
    <property type="entry name" value="ATP_synthase_B_chain"/>
</dbReference>
<dbReference type="NCBIfam" id="TIGR01144">
    <property type="entry name" value="ATP_synt_b"/>
    <property type="match status" value="1"/>
</dbReference>
<dbReference type="NCBIfam" id="NF004411">
    <property type="entry name" value="PRK05759.1-2"/>
    <property type="match status" value="1"/>
</dbReference>
<dbReference type="NCBIfam" id="NF004413">
    <property type="entry name" value="PRK05759.1-4"/>
    <property type="match status" value="1"/>
</dbReference>
<dbReference type="PANTHER" id="PTHR33445:SF1">
    <property type="entry name" value="ATP SYNTHASE SUBUNIT B"/>
    <property type="match status" value="1"/>
</dbReference>
<dbReference type="PANTHER" id="PTHR33445">
    <property type="entry name" value="ATP SYNTHASE SUBUNIT B', CHLOROPLASTIC"/>
    <property type="match status" value="1"/>
</dbReference>
<dbReference type="Pfam" id="PF00430">
    <property type="entry name" value="ATP-synt_B"/>
    <property type="match status" value="1"/>
</dbReference>
<dbReference type="SUPFAM" id="SSF81573">
    <property type="entry name" value="F1F0 ATP synthase subunit B, membrane domain"/>
    <property type="match status" value="1"/>
</dbReference>
<sequence length="156" mass="17264">MNLNATILGQAIAFVLFVLFCMKYVWPPLMAAIEKRQKEIADGLASAERAHKDLDLAKASATDQLKKAKAEAQVIIEQANKRRSQILDEAKAEAEQERTKIVAQAQAEIEAERKRAREELRKQVAILAVAGAEKIIERSVDEAANSDIVDKLVAEL</sequence>
<proteinExistence type="inferred from homology"/>
<organism>
    <name type="scientific">Escherichia coli O157:H7 (strain EC4115 / EHEC)</name>
    <dbReference type="NCBI Taxonomy" id="444450"/>
    <lineage>
        <taxon>Bacteria</taxon>
        <taxon>Pseudomonadati</taxon>
        <taxon>Pseudomonadota</taxon>
        <taxon>Gammaproteobacteria</taxon>
        <taxon>Enterobacterales</taxon>
        <taxon>Enterobacteriaceae</taxon>
        <taxon>Escherichia</taxon>
    </lineage>
</organism>
<evidence type="ECO:0000255" key="1">
    <source>
        <dbReference type="HAMAP-Rule" id="MF_01398"/>
    </source>
</evidence>
<protein>
    <recommendedName>
        <fullName evidence="1">ATP synthase subunit b</fullName>
    </recommendedName>
    <alternativeName>
        <fullName evidence="1">ATP synthase F(0) sector subunit b</fullName>
    </alternativeName>
    <alternativeName>
        <fullName evidence="1">ATPase subunit I</fullName>
    </alternativeName>
    <alternativeName>
        <fullName evidence="1">F-type ATPase subunit b</fullName>
        <shortName evidence="1">F-ATPase subunit b</shortName>
    </alternativeName>
</protein>
<name>ATPF_ECO5E</name>
<reference key="1">
    <citation type="journal article" date="2011" name="Proc. Natl. Acad. Sci. U.S.A.">
        <title>Genomic anatomy of Escherichia coli O157:H7 outbreaks.</title>
        <authorList>
            <person name="Eppinger M."/>
            <person name="Mammel M.K."/>
            <person name="Leclerc J.E."/>
            <person name="Ravel J."/>
            <person name="Cebula T.A."/>
        </authorList>
    </citation>
    <scope>NUCLEOTIDE SEQUENCE [LARGE SCALE GENOMIC DNA]</scope>
    <source>
        <strain>EC4115 / EHEC</strain>
    </source>
</reference>